<keyword id="KW-0687">Ribonucleoprotein</keyword>
<keyword id="KW-0689">Ribosomal protein</keyword>
<keyword id="KW-0694">RNA-binding</keyword>
<keyword id="KW-0699">rRNA-binding</keyword>
<evidence type="ECO:0000255" key="1">
    <source>
        <dbReference type="HAMAP-Rule" id="MF_00503"/>
    </source>
</evidence>
<evidence type="ECO:0000305" key="2"/>
<protein>
    <recommendedName>
        <fullName evidence="1">Large ribosomal subunit protein bL9</fullName>
    </recommendedName>
    <alternativeName>
        <fullName evidence="2">50S ribosomal protein L9</fullName>
    </alternativeName>
</protein>
<reference key="1">
    <citation type="submission" date="2008-10" db="EMBL/GenBank/DDBJ databases">
        <title>Genome sequence of Clostridium botulinum A2 Kyoto.</title>
        <authorList>
            <person name="Shrivastava S."/>
            <person name="Brinkac L.M."/>
            <person name="Brown J.L."/>
            <person name="Bruce D."/>
            <person name="Detter C.C."/>
            <person name="Johnson E.A."/>
            <person name="Munk C.A."/>
            <person name="Smith L.A."/>
            <person name="Smith T.J."/>
            <person name="Sutton G."/>
            <person name="Brettin T.S."/>
        </authorList>
    </citation>
    <scope>NUCLEOTIDE SEQUENCE [LARGE SCALE GENOMIC DNA]</scope>
    <source>
        <strain>Kyoto / Type A2</strain>
    </source>
</reference>
<accession>C1FP10</accession>
<sequence length="147" mass="16737">MKVILLKDVKSLGKKGDLVNASDGYARNYLIPKKLAEQATENNVHILNNKKEAERRQKLKELEEAQKLAKSLMGKEIKFKVKIGENGRLFGSITSKDISEKLKEQYNMDIDKKKIVAETIRQTGVYEAEIKIYPEVSTKVKVSVLEE</sequence>
<gene>
    <name evidence="1" type="primary">rplI</name>
    <name type="ordered locus">CLM_4127</name>
</gene>
<comment type="function">
    <text evidence="1">Binds to the 23S rRNA.</text>
</comment>
<comment type="similarity">
    <text evidence="1">Belongs to the bacterial ribosomal protein bL9 family.</text>
</comment>
<organism>
    <name type="scientific">Clostridium botulinum (strain Kyoto / Type A2)</name>
    <dbReference type="NCBI Taxonomy" id="536232"/>
    <lineage>
        <taxon>Bacteria</taxon>
        <taxon>Bacillati</taxon>
        <taxon>Bacillota</taxon>
        <taxon>Clostridia</taxon>
        <taxon>Eubacteriales</taxon>
        <taxon>Clostridiaceae</taxon>
        <taxon>Clostridium</taxon>
    </lineage>
</organism>
<proteinExistence type="inferred from homology"/>
<dbReference type="EMBL" id="CP001581">
    <property type="protein sequence ID" value="ACO85491.1"/>
    <property type="molecule type" value="Genomic_DNA"/>
</dbReference>
<dbReference type="RefSeq" id="WP_003359455.1">
    <property type="nucleotide sequence ID" value="NC_012563.1"/>
</dbReference>
<dbReference type="SMR" id="C1FP10"/>
<dbReference type="GeneID" id="92940422"/>
<dbReference type="KEGG" id="cby:CLM_4127"/>
<dbReference type="eggNOG" id="COG0359">
    <property type="taxonomic scope" value="Bacteria"/>
</dbReference>
<dbReference type="HOGENOM" id="CLU_078938_3_0_9"/>
<dbReference type="Proteomes" id="UP000001374">
    <property type="component" value="Chromosome"/>
</dbReference>
<dbReference type="GO" id="GO:1990904">
    <property type="term" value="C:ribonucleoprotein complex"/>
    <property type="evidence" value="ECO:0007669"/>
    <property type="project" value="UniProtKB-KW"/>
</dbReference>
<dbReference type="GO" id="GO:0005840">
    <property type="term" value="C:ribosome"/>
    <property type="evidence" value="ECO:0007669"/>
    <property type="project" value="UniProtKB-KW"/>
</dbReference>
<dbReference type="GO" id="GO:0019843">
    <property type="term" value="F:rRNA binding"/>
    <property type="evidence" value="ECO:0007669"/>
    <property type="project" value="UniProtKB-UniRule"/>
</dbReference>
<dbReference type="GO" id="GO:0003735">
    <property type="term" value="F:structural constituent of ribosome"/>
    <property type="evidence" value="ECO:0007669"/>
    <property type="project" value="InterPro"/>
</dbReference>
<dbReference type="GO" id="GO:0006412">
    <property type="term" value="P:translation"/>
    <property type="evidence" value="ECO:0007669"/>
    <property type="project" value="UniProtKB-UniRule"/>
</dbReference>
<dbReference type="FunFam" id="3.40.5.10:FF:000002">
    <property type="entry name" value="50S ribosomal protein L9"/>
    <property type="match status" value="1"/>
</dbReference>
<dbReference type="Gene3D" id="3.10.430.100">
    <property type="entry name" value="Ribosomal protein L9, C-terminal domain"/>
    <property type="match status" value="1"/>
</dbReference>
<dbReference type="Gene3D" id="3.40.5.10">
    <property type="entry name" value="Ribosomal protein L9, N-terminal domain"/>
    <property type="match status" value="1"/>
</dbReference>
<dbReference type="HAMAP" id="MF_00503">
    <property type="entry name" value="Ribosomal_bL9"/>
    <property type="match status" value="1"/>
</dbReference>
<dbReference type="InterPro" id="IPR000244">
    <property type="entry name" value="Ribosomal_bL9"/>
</dbReference>
<dbReference type="InterPro" id="IPR009027">
    <property type="entry name" value="Ribosomal_bL9/RNase_H1_N"/>
</dbReference>
<dbReference type="InterPro" id="IPR020594">
    <property type="entry name" value="Ribosomal_bL9_bac/chp"/>
</dbReference>
<dbReference type="InterPro" id="IPR020069">
    <property type="entry name" value="Ribosomal_bL9_C"/>
</dbReference>
<dbReference type="InterPro" id="IPR036791">
    <property type="entry name" value="Ribosomal_bL9_C_sf"/>
</dbReference>
<dbReference type="InterPro" id="IPR020070">
    <property type="entry name" value="Ribosomal_bL9_N"/>
</dbReference>
<dbReference type="InterPro" id="IPR036935">
    <property type="entry name" value="Ribosomal_bL9_N_sf"/>
</dbReference>
<dbReference type="NCBIfam" id="TIGR00158">
    <property type="entry name" value="L9"/>
    <property type="match status" value="1"/>
</dbReference>
<dbReference type="PANTHER" id="PTHR21368">
    <property type="entry name" value="50S RIBOSOMAL PROTEIN L9"/>
    <property type="match status" value="1"/>
</dbReference>
<dbReference type="Pfam" id="PF03948">
    <property type="entry name" value="Ribosomal_L9_C"/>
    <property type="match status" value="1"/>
</dbReference>
<dbReference type="Pfam" id="PF01281">
    <property type="entry name" value="Ribosomal_L9_N"/>
    <property type="match status" value="1"/>
</dbReference>
<dbReference type="SUPFAM" id="SSF55658">
    <property type="entry name" value="L9 N-domain-like"/>
    <property type="match status" value="1"/>
</dbReference>
<dbReference type="SUPFAM" id="SSF55653">
    <property type="entry name" value="Ribosomal protein L9 C-domain"/>
    <property type="match status" value="1"/>
</dbReference>
<dbReference type="PROSITE" id="PS00651">
    <property type="entry name" value="RIBOSOMAL_L9"/>
    <property type="match status" value="1"/>
</dbReference>
<feature type="chain" id="PRO_1000196234" description="Large ribosomal subunit protein bL9">
    <location>
        <begin position="1"/>
        <end position="147"/>
    </location>
</feature>
<name>RL9_CLOBJ</name>